<protein>
    <recommendedName>
        <fullName>Metallothionein-1</fullName>
        <shortName>MT-1</shortName>
    </recommendedName>
    <alternativeName>
        <fullName>Metallothionein-I</fullName>
        <shortName>MT-I</shortName>
    </alternativeName>
</protein>
<keyword id="KW-0007">Acetylation</keyword>
<keyword id="KW-0903">Direct protein sequencing</keyword>
<keyword id="KW-0479">Metal-binding</keyword>
<keyword id="KW-0480">Metal-thiolate cluster</keyword>
<keyword id="KW-1185">Reference proteome</keyword>
<keyword id="KW-0862">Zinc</keyword>
<name>MT1_CANLF</name>
<dbReference type="EMBL" id="D84397">
    <property type="protein sequence ID" value="BAA22941.1"/>
    <property type="molecule type" value="mRNA"/>
</dbReference>
<dbReference type="RefSeq" id="NP_001003173.1">
    <property type="nucleotide sequence ID" value="NM_001003173.1"/>
</dbReference>
<dbReference type="SMR" id="O19000"/>
<dbReference type="STRING" id="9615.ENSCAFP00000013400"/>
<dbReference type="PaxDb" id="9612-ENSCAFP00000013400"/>
<dbReference type="Ensembl" id="ENSCAFT00000014488.5">
    <property type="protein sequence ID" value="ENSCAFP00000013400.3"/>
    <property type="gene ID" value="ENSCAFG00000009113.5"/>
</dbReference>
<dbReference type="Ensembl" id="ENSCAFT00000014491.5">
    <property type="protein sequence ID" value="ENSCAFP00000013403.5"/>
    <property type="gene ID" value="ENSCAFG00000009110.5"/>
</dbReference>
<dbReference type="Ensembl" id="ENSCAFT00030007653.1">
    <property type="protein sequence ID" value="ENSCAFP00030006707.1"/>
    <property type="gene ID" value="ENSCAFG00030004152.1"/>
</dbReference>
<dbReference type="Ensembl" id="ENSCAFT00030007700.1">
    <property type="protein sequence ID" value="ENSCAFP00030006754.1"/>
    <property type="gene ID" value="ENSCAFG00030004180.1"/>
</dbReference>
<dbReference type="Ensembl" id="ENSCAFT00040025371.1">
    <property type="protein sequence ID" value="ENSCAFP00040022054.1"/>
    <property type="gene ID" value="ENSCAFG00040013737.1"/>
</dbReference>
<dbReference type="Ensembl" id="ENSCAFT00040025422.1">
    <property type="protein sequence ID" value="ENSCAFP00040022104.1"/>
    <property type="gene ID" value="ENSCAFG00040013776.1"/>
</dbReference>
<dbReference type="Ensembl" id="ENSCAFT00845006877.1">
    <property type="protein sequence ID" value="ENSCAFP00845005476.1"/>
    <property type="gene ID" value="ENSCAFG00845003828.1"/>
</dbReference>
<dbReference type="GeneID" id="403800"/>
<dbReference type="KEGG" id="cfa:100686073"/>
<dbReference type="KEGG" id="cfa:403800"/>
<dbReference type="CTD" id="4493"/>
<dbReference type="VEuPathDB" id="HostDB:ENSCAFG00845003828"/>
<dbReference type="eggNOG" id="KOG4738">
    <property type="taxonomic scope" value="Eukaryota"/>
</dbReference>
<dbReference type="GeneTree" id="ENSGT00950000182967"/>
<dbReference type="HOGENOM" id="CLU_171204_2_0_1"/>
<dbReference type="InParanoid" id="O19000"/>
<dbReference type="OMA" id="SEDCSCF"/>
<dbReference type="OrthoDB" id="9809400at2759"/>
<dbReference type="TreeFam" id="TF336054"/>
<dbReference type="Proteomes" id="UP000002254">
    <property type="component" value="Chromosome 2"/>
</dbReference>
<dbReference type="Proteomes" id="UP000694429">
    <property type="component" value="Chromosome 2"/>
</dbReference>
<dbReference type="Proteomes" id="UP000694542">
    <property type="component" value="Chromosome 2"/>
</dbReference>
<dbReference type="Proteomes" id="UP000805418">
    <property type="component" value="Chromosome 2"/>
</dbReference>
<dbReference type="Bgee" id="ENSCAFG00000009113">
    <property type="expression patterns" value="Expressed in liver and 46 other cell types or tissues"/>
</dbReference>
<dbReference type="GO" id="GO:0005737">
    <property type="term" value="C:cytoplasm"/>
    <property type="evidence" value="ECO:0000250"/>
    <property type="project" value="UniProtKB"/>
</dbReference>
<dbReference type="GO" id="GO:0005634">
    <property type="term" value="C:nucleus"/>
    <property type="evidence" value="ECO:0000250"/>
    <property type="project" value="UniProtKB"/>
</dbReference>
<dbReference type="GO" id="GO:0008270">
    <property type="term" value="F:zinc ion binding"/>
    <property type="evidence" value="ECO:0000250"/>
    <property type="project" value="UniProtKB"/>
</dbReference>
<dbReference type="GO" id="GO:0071294">
    <property type="term" value="P:cellular response to zinc ion"/>
    <property type="evidence" value="ECO:0000250"/>
    <property type="project" value="UniProtKB"/>
</dbReference>
<dbReference type="GO" id="GO:0045926">
    <property type="term" value="P:negative regulation of growth"/>
    <property type="evidence" value="ECO:0000250"/>
    <property type="project" value="UniProtKB"/>
</dbReference>
<dbReference type="FunFam" id="4.10.10.10:FF:000001">
    <property type="entry name" value="Metallothionein"/>
    <property type="match status" value="1"/>
</dbReference>
<dbReference type="Gene3D" id="4.10.10.10">
    <property type="entry name" value="Metallothionein Isoform II"/>
    <property type="match status" value="1"/>
</dbReference>
<dbReference type="InterPro" id="IPR017854">
    <property type="entry name" value="Metalthion_dom_sf"/>
</dbReference>
<dbReference type="InterPro" id="IPR023587">
    <property type="entry name" value="Metalthion_dom_sf_vert"/>
</dbReference>
<dbReference type="InterPro" id="IPR000006">
    <property type="entry name" value="Metalthion_vert"/>
</dbReference>
<dbReference type="InterPro" id="IPR018064">
    <property type="entry name" value="Metalthion_vert_metal_BS"/>
</dbReference>
<dbReference type="PANTHER" id="PTHR23299">
    <property type="entry name" value="METALLOTHIONEIN"/>
    <property type="match status" value="1"/>
</dbReference>
<dbReference type="PANTHER" id="PTHR23299:SF22">
    <property type="entry name" value="METALLOTHIONEIN-1G"/>
    <property type="match status" value="1"/>
</dbReference>
<dbReference type="Pfam" id="PF00131">
    <property type="entry name" value="Metallothio"/>
    <property type="match status" value="1"/>
</dbReference>
<dbReference type="PRINTS" id="PR00860">
    <property type="entry name" value="MTVERTEBRATE"/>
</dbReference>
<dbReference type="SUPFAM" id="SSF57868">
    <property type="entry name" value="Metallothionein"/>
    <property type="match status" value="1"/>
</dbReference>
<dbReference type="PROSITE" id="PS00203">
    <property type="entry name" value="METALLOTHIONEIN_VRT"/>
    <property type="match status" value="1"/>
</dbReference>
<gene>
    <name type="primary">MT1</name>
</gene>
<sequence length="61" mass="6031">MDPDCSCSTGGSCTCAGSCKCKECKCTSCKKSCCSCCPVGCAKCAQGCICKGASDKCSCCA</sequence>
<evidence type="ECO:0000250" key="1">
    <source>
        <dbReference type="UniProtKB" id="P02795"/>
    </source>
</evidence>
<evidence type="ECO:0000250" key="2">
    <source>
        <dbReference type="UniProtKB" id="P02802"/>
    </source>
</evidence>
<evidence type="ECO:0000305" key="3"/>
<feature type="chain" id="PRO_0000197198" description="Metallothionein-1">
    <location>
        <begin position="1"/>
        <end position="61"/>
    </location>
</feature>
<feature type="region of interest" description="Beta">
    <location>
        <begin position="1"/>
        <end position="29"/>
    </location>
</feature>
<feature type="region of interest" description="Alpha">
    <location>
        <begin position="30"/>
        <end position="61"/>
    </location>
</feature>
<feature type="binding site" evidence="1">
    <location>
        <position position="5"/>
    </location>
    <ligand>
        <name>a divalent metal cation</name>
        <dbReference type="ChEBI" id="CHEBI:60240"/>
        <label>1</label>
        <note>in cluster B</note>
    </ligand>
</feature>
<feature type="binding site" evidence="1">
    <location>
        <position position="7"/>
    </location>
    <ligand>
        <name>a divalent metal cation</name>
        <dbReference type="ChEBI" id="CHEBI:60240"/>
        <label>1</label>
        <note>in cluster B</note>
    </ligand>
</feature>
<feature type="binding site" evidence="1">
    <location>
        <position position="7"/>
    </location>
    <ligand>
        <name>a divalent metal cation</name>
        <dbReference type="ChEBI" id="CHEBI:60240"/>
        <label>2</label>
        <note>in cluster B</note>
    </ligand>
</feature>
<feature type="binding site" evidence="1">
    <location>
        <position position="13"/>
    </location>
    <ligand>
        <name>a divalent metal cation</name>
        <dbReference type="ChEBI" id="CHEBI:60240"/>
        <label>2</label>
        <note>in cluster B</note>
    </ligand>
</feature>
<feature type="binding site" evidence="1">
    <location>
        <position position="15"/>
    </location>
    <ligand>
        <name>a divalent metal cation</name>
        <dbReference type="ChEBI" id="CHEBI:60240"/>
        <label>2</label>
        <note>in cluster B</note>
    </ligand>
</feature>
<feature type="binding site" evidence="1">
    <location>
        <position position="15"/>
    </location>
    <ligand>
        <name>a divalent metal cation</name>
        <dbReference type="ChEBI" id="CHEBI:60240"/>
        <label>3</label>
        <note>in cluster B</note>
    </ligand>
</feature>
<feature type="binding site" evidence="1">
    <location>
        <position position="19"/>
    </location>
    <ligand>
        <name>a divalent metal cation</name>
        <dbReference type="ChEBI" id="CHEBI:60240"/>
        <label>3</label>
        <note>in cluster B</note>
    </ligand>
</feature>
<feature type="binding site" evidence="1">
    <location>
        <position position="21"/>
    </location>
    <ligand>
        <name>a divalent metal cation</name>
        <dbReference type="ChEBI" id="CHEBI:60240"/>
        <label>1</label>
        <note>in cluster B</note>
    </ligand>
</feature>
<feature type="binding site" evidence="1">
    <location>
        <position position="24"/>
    </location>
    <ligand>
        <name>a divalent metal cation</name>
        <dbReference type="ChEBI" id="CHEBI:60240"/>
        <label>1</label>
        <note>in cluster B</note>
    </ligand>
</feature>
<feature type="binding site" evidence="1">
    <location>
        <position position="24"/>
    </location>
    <ligand>
        <name>a divalent metal cation</name>
        <dbReference type="ChEBI" id="CHEBI:60240"/>
        <label>3</label>
        <note>in cluster B</note>
    </ligand>
</feature>
<feature type="binding site" evidence="1">
    <location>
        <position position="26"/>
    </location>
    <ligand>
        <name>a divalent metal cation</name>
        <dbReference type="ChEBI" id="CHEBI:60240"/>
        <label>2</label>
        <note>in cluster B</note>
    </ligand>
</feature>
<feature type="binding site" evidence="1">
    <location>
        <position position="29"/>
    </location>
    <ligand>
        <name>a divalent metal cation</name>
        <dbReference type="ChEBI" id="CHEBI:60240"/>
        <label>3</label>
        <note>in cluster B</note>
    </ligand>
</feature>
<feature type="binding site" evidence="1">
    <location>
        <position position="33"/>
    </location>
    <ligand>
        <name>a divalent metal cation</name>
        <dbReference type="ChEBI" id="CHEBI:60240"/>
        <label>4</label>
        <note>in cluster A</note>
    </ligand>
</feature>
<feature type="binding site" evidence="1">
    <location>
        <position position="34"/>
    </location>
    <ligand>
        <name>a divalent metal cation</name>
        <dbReference type="ChEBI" id="CHEBI:60240"/>
        <label>4</label>
        <note>in cluster A</note>
    </ligand>
</feature>
<feature type="binding site" evidence="1">
    <location>
        <position position="34"/>
    </location>
    <ligand>
        <name>a divalent metal cation</name>
        <dbReference type="ChEBI" id="CHEBI:60240"/>
        <label>5</label>
        <note>in cluster A</note>
    </ligand>
</feature>
<feature type="binding site" evidence="1">
    <location>
        <position position="36"/>
    </location>
    <ligand>
        <name>a divalent metal cation</name>
        <dbReference type="ChEBI" id="CHEBI:60240"/>
        <label>5</label>
        <note>in cluster A</note>
    </ligand>
</feature>
<feature type="binding site" evidence="1">
    <location>
        <position position="37"/>
    </location>
    <ligand>
        <name>a divalent metal cation</name>
        <dbReference type="ChEBI" id="CHEBI:60240"/>
        <label>5</label>
        <note>in cluster A</note>
    </ligand>
</feature>
<feature type="binding site" evidence="1">
    <location>
        <position position="37"/>
    </location>
    <ligand>
        <name>a divalent metal cation</name>
        <dbReference type="ChEBI" id="CHEBI:60240"/>
        <label>6</label>
        <note>in cluster A</note>
    </ligand>
</feature>
<feature type="binding site" evidence="1">
    <location>
        <position position="41"/>
    </location>
    <ligand>
        <name>a divalent metal cation</name>
        <dbReference type="ChEBI" id="CHEBI:60240"/>
        <label>6</label>
        <note>in cluster A</note>
    </ligand>
</feature>
<feature type="binding site" evidence="1">
    <location>
        <position position="44"/>
    </location>
    <ligand>
        <name>a divalent metal cation</name>
        <dbReference type="ChEBI" id="CHEBI:60240"/>
        <label>4</label>
        <note>in cluster A</note>
    </ligand>
</feature>
<feature type="binding site" evidence="1">
    <location>
        <position position="44"/>
    </location>
    <ligand>
        <name>a divalent metal cation</name>
        <dbReference type="ChEBI" id="CHEBI:60240"/>
        <label>6</label>
        <note>in cluster A</note>
    </ligand>
</feature>
<feature type="binding site" evidence="1">
    <location>
        <position position="48"/>
    </location>
    <ligand>
        <name>a divalent metal cation</name>
        <dbReference type="ChEBI" id="CHEBI:60240"/>
        <label>4</label>
        <note>in cluster A</note>
    </ligand>
</feature>
<feature type="binding site" evidence="1">
    <location>
        <position position="50"/>
    </location>
    <ligand>
        <name>a divalent metal cation</name>
        <dbReference type="ChEBI" id="CHEBI:60240"/>
        <label>5</label>
        <note>in cluster A</note>
    </ligand>
</feature>
<feature type="binding site" evidence="1">
    <location>
        <position position="50"/>
    </location>
    <ligand>
        <name>a divalent metal cation</name>
        <dbReference type="ChEBI" id="CHEBI:60240"/>
        <label>7</label>
        <note>in cluster A</note>
    </ligand>
</feature>
<feature type="binding site" evidence="1">
    <location>
        <position position="57"/>
    </location>
    <ligand>
        <name>a divalent metal cation</name>
        <dbReference type="ChEBI" id="CHEBI:60240"/>
        <label>7</label>
        <note>in cluster A</note>
    </ligand>
</feature>
<feature type="binding site" evidence="1">
    <location>
        <position position="59"/>
    </location>
    <ligand>
        <name>a divalent metal cation</name>
        <dbReference type="ChEBI" id="CHEBI:60240"/>
        <label>7</label>
        <note>in cluster A</note>
    </ligand>
</feature>
<feature type="binding site" evidence="1">
    <location>
        <position position="60"/>
    </location>
    <ligand>
        <name>a divalent metal cation</name>
        <dbReference type="ChEBI" id="CHEBI:60240"/>
        <label>6</label>
        <note>in cluster A</note>
    </ligand>
</feature>
<feature type="binding site" evidence="1">
    <location>
        <position position="60"/>
    </location>
    <ligand>
        <name>a divalent metal cation</name>
        <dbReference type="ChEBI" id="CHEBI:60240"/>
        <label>7</label>
        <note>in cluster A</note>
    </ligand>
</feature>
<feature type="modified residue" description="N-acetylmethionine" evidence="2">
    <location>
        <position position="1"/>
    </location>
</feature>
<proteinExistence type="evidence at protein level"/>
<organism>
    <name type="scientific">Canis lupus familiaris</name>
    <name type="common">Dog</name>
    <name type="synonym">Canis familiaris</name>
    <dbReference type="NCBI Taxonomy" id="9615"/>
    <lineage>
        <taxon>Eukaryota</taxon>
        <taxon>Metazoa</taxon>
        <taxon>Chordata</taxon>
        <taxon>Craniata</taxon>
        <taxon>Vertebrata</taxon>
        <taxon>Euteleostomi</taxon>
        <taxon>Mammalia</taxon>
        <taxon>Eutheria</taxon>
        <taxon>Laurasiatheria</taxon>
        <taxon>Carnivora</taxon>
        <taxon>Caniformia</taxon>
        <taxon>Canidae</taxon>
        <taxon>Canis</taxon>
    </lineage>
</organism>
<comment type="function">
    <text>Metallothioneins have a high content of cysteine residues that bind various heavy metals; these proteins are transcriptionally regulated by both heavy metals and glucocorticoids.</text>
</comment>
<comment type="domain">
    <text>Class I metallothioneins contain 2 metal-binding domains: four divalent ions are chelated within cluster A of the alpha domain and are coordinated via cysteinyl thiolate bridges to 11 cysteine ligands. Cluster B, the corresponding region within the beta domain, can ligate three divalent ions to 9 cysteines.</text>
</comment>
<comment type="similarity">
    <text evidence="3">Belongs to the metallothionein superfamily. Type 1 family.</text>
</comment>
<reference key="1">
    <citation type="journal article" date="1985" name="Arch. Biochem. Biophys.">
        <title>Canine hepatic lysosomal copper protein: identification as metallothionein.</title>
        <authorList>
            <person name="Lerch K."/>
            <person name="Johnson G.F."/>
            <person name="Grushoff P.S."/>
            <person name="Sternlieb I."/>
        </authorList>
    </citation>
    <scope>PROTEIN SEQUENCE</scope>
    <source>
        <tissue>Liver</tissue>
    </source>
</reference>
<reference key="2">
    <citation type="journal article" date="1997" name="J. Vet. Med. Sci.">
        <title>Molecular cloning of a canine metallothionein cDNA.</title>
        <authorList>
            <person name="Kobayashi K."/>
            <person name="Shimada A."/>
            <person name="Yamano Y."/>
            <person name="Umemura T."/>
        </authorList>
    </citation>
    <scope>NUCLEOTIDE SEQUENCE [MRNA]</scope>
    <source>
        <strain>Beagle</strain>
        <tissue>Liver</tissue>
    </source>
</reference>
<accession>O19000</accession>